<proteinExistence type="evidence at protein level"/>
<feature type="transit peptide" description="Mitochondrion" evidence="2">
    <location>
        <begin position="1"/>
        <end position="37"/>
    </location>
</feature>
<feature type="chain" id="PRO_0000421674" description="Glycine-rich RNA-binding protein 3, mitochondrial">
    <location>
        <begin position="38"/>
        <end position="309"/>
    </location>
</feature>
<feature type="domain" description="RRM" evidence="3">
    <location>
        <begin position="40"/>
        <end position="118"/>
    </location>
</feature>
<feature type="region of interest" description="Disordered" evidence="4">
    <location>
        <begin position="247"/>
        <end position="309"/>
    </location>
</feature>
<feature type="compositionally biased region" description="Polar residues" evidence="4">
    <location>
        <begin position="258"/>
        <end position="273"/>
    </location>
</feature>
<protein>
    <recommendedName>
        <fullName evidence="10">Glycine-rich RNA-binding protein 3, mitochondrial</fullName>
        <shortName evidence="10">AtGR-RBP3</shortName>
    </recommendedName>
    <alternativeName>
        <fullName evidence="12">AtRBG3</fullName>
    </alternativeName>
    <alternativeName>
        <fullName evidence="11">Mitochondrial RNA-binding protein 2a</fullName>
        <shortName evidence="11">At-mRBP2a</shortName>
    </alternativeName>
    <alternativeName>
        <fullName evidence="13">Organelle RRM domain-containing protein 3</fullName>
    </alternativeName>
</protein>
<name>RBG3_ARATH</name>
<organism>
    <name type="scientific">Arabidopsis thaliana</name>
    <name type="common">Mouse-ear cress</name>
    <dbReference type="NCBI Taxonomy" id="3702"/>
    <lineage>
        <taxon>Eukaryota</taxon>
        <taxon>Viridiplantae</taxon>
        <taxon>Streptophyta</taxon>
        <taxon>Embryophyta</taxon>
        <taxon>Tracheophyta</taxon>
        <taxon>Spermatophyta</taxon>
        <taxon>Magnoliopsida</taxon>
        <taxon>eudicotyledons</taxon>
        <taxon>Gunneridae</taxon>
        <taxon>Pentapetalae</taxon>
        <taxon>rosids</taxon>
        <taxon>malvids</taxon>
        <taxon>Brassicales</taxon>
        <taxon>Brassicaceae</taxon>
        <taxon>Camelineae</taxon>
        <taxon>Arabidopsis</taxon>
    </lineage>
</organism>
<keyword id="KW-0496">Mitochondrion</keyword>
<keyword id="KW-0507">mRNA processing</keyword>
<keyword id="KW-1185">Reference proteome</keyword>
<keyword id="KW-0694">RNA-binding</keyword>
<keyword id="KW-0809">Transit peptide</keyword>
<gene>
    <name evidence="12" type="primary">RBG3</name>
    <name evidence="10" type="synonym">GR-RBP3</name>
    <name evidence="11" type="synonym">MRBP2A</name>
    <name evidence="13" type="synonym">ORRM3</name>
    <name evidence="15" type="ordered locus">At5g61030</name>
    <name evidence="16" type="ORF">MAF19_30</name>
</gene>
<accession>Q9FNR1</accession>
<reference key="1">
    <citation type="journal article" date="1997" name="DNA Res.">
        <title>Structural analysis of Arabidopsis thaliana chromosome 5. II. Sequence features of the regions of 1,044,062 bp covered by thirteen physically assigned P1 clones.</title>
        <authorList>
            <person name="Kotani H."/>
            <person name="Nakamura Y."/>
            <person name="Sato S."/>
            <person name="Kaneko T."/>
            <person name="Asamizu E."/>
            <person name="Miyajima N."/>
            <person name="Tabata S."/>
        </authorList>
    </citation>
    <scope>NUCLEOTIDE SEQUENCE [LARGE SCALE GENOMIC DNA]</scope>
    <source>
        <strain>cv. Columbia</strain>
    </source>
</reference>
<reference key="2">
    <citation type="journal article" date="2017" name="Plant J.">
        <title>Araport11: a complete reannotation of the Arabidopsis thaliana reference genome.</title>
        <authorList>
            <person name="Cheng C.Y."/>
            <person name="Krishnakumar V."/>
            <person name="Chan A.P."/>
            <person name="Thibaud-Nissen F."/>
            <person name="Schobel S."/>
            <person name="Town C.D."/>
        </authorList>
    </citation>
    <scope>GENOME REANNOTATION</scope>
    <source>
        <strain>cv. Columbia</strain>
    </source>
</reference>
<reference key="3">
    <citation type="journal article" date="2003" name="Science">
        <title>Empirical analysis of transcriptional activity in the Arabidopsis genome.</title>
        <authorList>
            <person name="Yamada K."/>
            <person name="Lim J."/>
            <person name="Dale J.M."/>
            <person name="Chen H."/>
            <person name="Shinn P."/>
            <person name="Palm C.J."/>
            <person name="Southwick A.M."/>
            <person name="Wu H.C."/>
            <person name="Kim C.J."/>
            <person name="Nguyen M."/>
            <person name="Pham P.K."/>
            <person name="Cheuk R.F."/>
            <person name="Karlin-Newmann G."/>
            <person name="Liu S.X."/>
            <person name="Lam B."/>
            <person name="Sakano H."/>
            <person name="Wu T."/>
            <person name="Yu G."/>
            <person name="Miranda M."/>
            <person name="Quach H.L."/>
            <person name="Tripp M."/>
            <person name="Chang C.H."/>
            <person name="Lee J.M."/>
            <person name="Toriumi M.J."/>
            <person name="Chan M.M."/>
            <person name="Tang C.C."/>
            <person name="Onodera C.S."/>
            <person name="Deng J.M."/>
            <person name="Akiyama K."/>
            <person name="Ansari Y."/>
            <person name="Arakawa T."/>
            <person name="Banh J."/>
            <person name="Banno F."/>
            <person name="Bowser L."/>
            <person name="Brooks S.Y."/>
            <person name="Carninci P."/>
            <person name="Chao Q."/>
            <person name="Choy N."/>
            <person name="Enju A."/>
            <person name="Goldsmith A.D."/>
            <person name="Gurjal M."/>
            <person name="Hansen N.F."/>
            <person name="Hayashizaki Y."/>
            <person name="Johnson-Hopson C."/>
            <person name="Hsuan V.W."/>
            <person name="Iida K."/>
            <person name="Karnes M."/>
            <person name="Khan S."/>
            <person name="Koesema E."/>
            <person name="Ishida J."/>
            <person name="Jiang P.X."/>
            <person name="Jones T."/>
            <person name="Kawai J."/>
            <person name="Kamiya A."/>
            <person name="Meyers C."/>
            <person name="Nakajima M."/>
            <person name="Narusaka M."/>
            <person name="Seki M."/>
            <person name="Sakurai T."/>
            <person name="Satou M."/>
            <person name="Tamse R."/>
            <person name="Vaysberg M."/>
            <person name="Wallender E.K."/>
            <person name="Wong C."/>
            <person name="Yamamura Y."/>
            <person name="Yuan S."/>
            <person name="Shinozaki K."/>
            <person name="Davis R.W."/>
            <person name="Theologis A."/>
            <person name="Ecker J.R."/>
        </authorList>
    </citation>
    <scope>NUCLEOTIDE SEQUENCE [LARGE SCALE MRNA]</scope>
    <source>
        <strain>cv. Columbia</strain>
    </source>
</reference>
<reference key="4">
    <citation type="submission" date="2009-03" db="EMBL/GenBank/DDBJ databases">
        <title>ORF cloning and analysis of Arabidopsis transcription factor genes.</title>
        <authorList>
            <person name="Fujita M."/>
            <person name="Mizukado S."/>
            <person name="Seki M."/>
            <person name="Shinozaki K."/>
            <person name="Mitsuda N."/>
            <person name="Takiguchi Y."/>
            <person name="Takagi M."/>
        </authorList>
    </citation>
    <scope>NUCLEOTIDE SEQUENCE [LARGE SCALE MRNA]</scope>
</reference>
<reference key="5">
    <citation type="journal article" date="2002" name="Nucleic Acids Res.">
        <title>Genome analysis: RNA recognition motif (RRM) and K homology (KH) domain RNA-binding proteins from the flowering plant Arabidopsis thaliana.</title>
        <authorList>
            <person name="Lorkovic Z.J."/>
            <person name="Barta A."/>
        </authorList>
    </citation>
    <scope>GENE FAMILY</scope>
</reference>
<reference key="6">
    <citation type="journal article" date="2002" name="Proc. Natl. Acad. Sci. U.S.A.">
        <title>A family of RRM-type RNA-binding proteins specific to plant mitochondria.</title>
        <authorList>
            <person name="Vermel M."/>
            <person name="Guermann B."/>
            <person name="Delage L."/>
            <person name="Grienenberger J.M."/>
            <person name="Marechal-Drouard L."/>
            <person name="Gualberto J.M."/>
        </authorList>
    </citation>
    <scope>SUBCELLULAR LOCATION</scope>
</reference>
<reference key="7">
    <citation type="journal article" date="2005" name="J. Exp. Bot.">
        <title>Characterization of transgenic Arabidopsis plants overexpressing GR-RBP4 under high salinity, dehydration, or cold stress.</title>
        <authorList>
            <person name="Kwak K.J."/>
            <person name="Kim Y.O."/>
            <person name="Kang H."/>
        </authorList>
    </citation>
    <scope>INDUCTION BY COLD</scope>
</reference>
<reference key="8">
    <citation type="journal article" date="2010" name="Plant Signal. Behav.">
        <title>Functional diversity of the plant glycine-rich proteins superfamily.</title>
        <authorList>
            <person name="Mangeon A."/>
            <person name="Junqueira R.M."/>
            <person name="Sachetto-Martins G."/>
        </authorList>
    </citation>
    <scope>NOMENCLATURE</scope>
</reference>
<reference key="9">
    <citation type="journal article" date="2015" name="Nucleic Acids Res.">
        <title>Two RNA recognition motif-containing proteins are plant mitochondrial editing factors.</title>
        <authorList>
            <person name="Shi X."/>
            <person name="Hanson M.R."/>
            <person name="Bentolila S."/>
        </authorList>
    </citation>
    <scope>FUNCTION</scope>
    <scope>HOMODIMERIZATION</scope>
    <scope>INTERACTION WITH ORRM2 AND MORF8/RIP1</scope>
    <scope>DISRUPTION PHENOTYPE</scope>
</reference>
<reference key="10">
    <citation type="journal article" date="2016" name="Plant Physiol.">
        <title>RNA recognition motif-containing protein ORRM4 broadly affects mitochondrial RNA editing and impacts plant development and flowering.</title>
        <authorList>
            <person name="Shi X."/>
            <person name="Germain A."/>
            <person name="Hanson M.R."/>
            <person name="Bentolila S."/>
        </authorList>
    </citation>
    <scope>INTERACTION WITH RBG5/ORRM4</scope>
    <scope>SUBCELLULAR LOCATION</scope>
</reference>
<reference key="11">
    <citation type="journal article" date="2017" name="J. Exp. Bot.">
        <title>ORRM5, an RNA recognition motif-containing protein, has a unique effect on mitochondrial RNA editing.</title>
        <authorList>
            <person name="Shi X."/>
            <person name="Castandet B."/>
            <person name="Germain A."/>
            <person name="Hanson M.R."/>
            <person name="Bentolila S."/>
        </authorList>
    </citation>
    <scope>INTERACTION WITH RBG2/ORRM5</scope>
    <source>
        <strain>cv. Columbia</strain>
    </source>
</reference>
<dbReference type="EMBL" id="AB006696">
    <property type="protein sequence ID" value="BAB10366.1"/>
    <property type="molecule type" value="Genomic_DNA"/>
</dbReference>
<dbReference type="EMBL" id="CP002688">
    <property type="protein sequence ID" value="AED97414.1"/>
    <property type="molecule type" value="Genomic_DNA"/>
</dbReference>
<dbReference type="EMBL" id="CP002688">
    <property type="protein sequence ID" value="ANM69243.1"/>
    <property type="molecule type" value="Genomic_DNA"/>
</dbReference>
<dbReference type="EMBL" id="AY060565">
    <property type="protein sequence ID" value="AAL31194.1"/>
    <property type="molecule type" value="mRNA"/>
</dbReference>
<dbReference type="EMBL" id="AY125548">
    <property type="protein sequence ID" value="AAM78058.1"/>
    <property type="molecule type" value="mRNA"/>
</dbReference>
<dbReference type="EMBL" id="AB493804">
    <property type="protein sequence ID" value="BAH30642.1"/>
    <property type="molecule type" value="mRNA"/>
</dbReference>
<dbReference type="RefSeq" id="NP_001330940.1">
    <property type="nucleotide sequence ID" value="NM_001345440.1"/>
</dbReference>
<dbReference type="RefSeq" id="NP_200911.1">
    <property type="nucleotide sequence ID" value="NM_125496.3"/>
</dbReference>
<dbReference type="SMR" id="Q9FNR1"/>
<dbReference type="FunCoup" id="Q9FNR1">
    <property type="interactions" value="132"/>
</dbReference>
<dbReference type="IntAct" id="Q9FNR1">
    <property type="interactions" value="1"/>
</dbReference>
<dbReference type="STRING" id="3702.Q9FNR1"/>
<dbReference type="iPTMnet" id="Q9FNR1"/>
<dbReference type="MetOSite" id="Q9FNR1"/>
<dbReference type="PaxDb" id="3702-AT5G61030.1"/>
<dbReference type="ProteomicsDB" id="236519"/>
<dbReference type="EnsemblPlants" id="AT5G61030.1">
    <property type="protein sequence ID" value="AT5G61030.1"/>
    <property type="gene ID" value="AT5G61030"/>
</dbReference>
<dbReference type="EnsemblPlants" id="AT5G61030.2">
    <property type="protein sequence ID" value="AT5G61030.2"/>
    <property type="gene ID" value="AT5G61030"/>
</dbReference>
<dbReference type="GeneID" id="836224"/>
<dbReference type="Gramene" id="AT5G61030.1">
    <property type="protein sequence ID" value="AT5G61030.1"/>
    <property type="gene ID" value="AT5G61030"/>
</dbReference>
<dbReference type="Gramene" id="AT5G61030.2">
    <property type="protein sequence ID" value="AT5G61030.2"/>
    <property type="gene ID" value="AT5G61030"/>
</dbReference>
<dbReference type="KEGG" id="ath:AT5G61030"/>
<dbReference type="Araport" id="AT5G61030"/>
<dbReference type="TAIR" id="AT5G61030">
    <property type="gene designation" value="RBGA7"/>
</dbReference>
<dbReference type="eggNOG" id="KOG0118">
    <property type="taxonomic scope" value="Eukaryota"/>
</dbReference>
<dbReference type="HOGENOM" id="CLU_012062_13_0_1"/>
<dbReference type="InParanoid" id="Q9FNR1"/>
<dbReference type="OMA" id="KPEMING"/>
<dbReference type="OrthoDB" id="439808at2759"/>
<dbReference type="PRO" id="PR:Q9FNR1"/>
<dbReference type="Proteomes" id="UP000006548">
    <property type="component" value="Chromosome 5"/>
</dbReference>
<dbReference type="ExpressionAtlas" id="Q9FNR1">
    <property type="expression patterns" value="baseline and differential"/>
</dbReference>
<dbReference type="GO" id="GO:0005739">
    <property type="term" value="C:mitochondrion"/>
    <property type="evidence" value="ECO:0000314"/>
    <property type="project" value="UniProtKB"/>
</dbReference>
<dbReference type="GO" id="GO:0005524">
    <property type="term" value="F:ATP binding"/>
    <property type="evidence" value="ECO:0007005"/>
    <property type="project" value="TAIR"/>
</dbReference>
<dbReference type="GO" id="GO:0005507">
    <property type="term" value="F:copper ion binding"/>
    <property type="evidence" value="ECO:0007005"/>
    <property type="project" value="TAIR"/>
</dbReference>
<dbReference type="GO" id="GO:0003729">
    <property type="term" value="F:mRNA binding"/>
    <property type="evidence" value="ECO:0000314"/>
    <property type="project" value="TAIR"/>
</dbReference>
<dbReference type="GO" id="GO:0003723">
    <property type="term" value="F:RNA binding"/>
    <property type="evidence" value="ECO:0000314"/>
    <property type="project" value="TAIR"/>
</dbReference>
<dbReference type="GO" id="GO:0003697">
    <property type="term" value="F:single-stranded DNA binding"/>
    <property type="evidence" value="ECO:0000314"/>
    <property type="project" value="TAIR"/>
</dbReference>
<dbReference type="GO" id="GO:0016554">
    <property type="term" value="P:cytidine to uridine editing"/>
    <property type="evidence" value="ECO:0000315"/>
    <property type="project" value="UniProtKB"/>
</dbReference>
<dbReference type="GO" id="GO:0080156">
    <property type="term" value="P:mitochondrial mRNA modification"/>
    <property type="evidence" value="ECO:0000315"/>
    <property type="project" value="TAIR"/>
</dbReference>
<dbReference type="GO" id="GO:0006397">
    <property type="term" value="P:mRNA processing"/>
    <property type="evidence" value="ECO:0007669"/>
    <property type="project" value="UniProtKB-KW"/>
</dbReference>
<dbReference type="GO" id="GO:0009409">
    <property type="term" value="P:response to cold"/>
    <property type="evidence" value="ECO:0000270"/>
    <property type="project" value="UniProtKB"/>
</dbReference>
<dbReference type="CDD" id="cd21608">
    <property type="entry name" value="RRM2_NsCP33_like"/>
    <property type="match status" value="1"/>
</dbReference>
<dbReference type="FunFam" id="3.30.70.330:FF:000631">
    <property type="entry name" value="Glycine-rich RNA-binding protein 3, mitochondrial"/>
    <property type="match status" value="1"/>
</dbReference>
<dbReference type="Gene3D" id="3.30.70.330">
    <property type="match status" value="1"/>
</dbReference>
<dbReference type="InterPro" id="IPR012677">
    <property type="entry name" value="Nucleotide-bd_a/b_plait_sf"/>
</dbReference>
<dbReference type="InterPro" id="IPR035979">
    <property type="entry name" value="RBD_domain_sf"/>
</dbReference>
<dbReference type="InterPro" id="IPR048289">
    <property type="entry name" value="RRM2_NsCP33-like"/>
</dbReference>
<dbReference type="InterPro" id="IPR000504">
    <property type="entry name" value="RRM_dom"/>
</dbReference>
<dbReference type="InterPro" id="IPR052462">
    <property type="entry name" value="SLIRP/GR-RBP-like"/>
</dbReference>
<dbReference type="PANTHER" id="PTHR48027">
    <property type="entry name" value="HETEROGENEOUS NUCLEAR RIBONUCLEOPROTEIN 87F-RELATED"/>
    <property type="match status" value="1"/>
</dbReference>
<dbReference type="Pfam" id="PF00076">
    <property type="entry name" value="RRM_1"/>
    <property type="match status" value="1"/>
</dbReference>
<dbReference type="SMART" id="SM00360">
    <property type="entry name" value="RRM"/>
    <property type="match status" value="1"/>
</dbReference>
<dbReference type="SUPFAM" id="SSF54928">
    <property type="entry name" value="RNA-binding domain, RBD"/>
    <property type="match status" value="1"/>
</dbReference>
<dbReference type="PROSITE" id="PS50102">
    <property type="entry name" value="RRM"/>
    <property type="match status" value="1"/>
</dbReference>
<comment type="function">
    <text evidence="1 7">Possibly has a role in RNA transcription or processing during stress (By similarity). Involved in C-to-U editing of mitochondrial RNA. Functions as a minor mitochondrial editing factor. Controls 6 percent of the mitochondrial editing sites (PubMed:25800738).</text>
</comment>
<comment type="subunit">
    <text evidence="7 8 9">Homodimer (PubMed:25800738). Interacts with ORRM2 and MORF8/RIP1 (PubMed:25800738). Interacts with RBG5/ORRM4 (PubMed:26578708). Binds to RBG2/ORRM5 (PubMed:28549172).</text>
</comment>
<comment type="subcellular location">
    <subcellularLocation>
        <location evidence="5 8">Mitochondrion</location>
    </subcellularLocation>
</comment>
<comment type="induction">
    <text evidence="6">Up-regulated by cold stress.</text>
</comment>
<comment type="disruption phenotype">
    <text evidence="7">No visible phenotype under normal growth conditions, but mutant plants exhibit severe editing defects in mitochondrial transcripts.</text>
</comment>
<comment type="similarity">
    <text evidence="14">Belongs to the GR-RBP family.</text>
</comment>
<evidence type="ECO:0000250" key="1">
    <source>
        <dbReference type="UniProtKB" id="Q9LIS2"/>
    </source>
</evidence>
<evidence type="ECO:0000255" key="2"/>
<evidence type="ECO:0000255" key="3">
    <source>
        <dbReference type="PROSITE-ProRule" id="PRU00176"/>
    </source>
</evidence>
<evidence type="ECO:0000256" key="4">
    <source>
        <dbReference type="SAM" id="MobiDB-lite"/>
    </source>
</evidence>
<evidence type="ECO:0000269" key="5">
    <source>
    </source>
</evidence>
<evidence type="ECO:0000269" key="6">
    <source>
    </source>
</evidence>
<evidence type="ECO:0000269" key="7">
    <source>
    </source>
</evidence>
<evidence type="ECO:0000269" key="8">
    <source>
    </source>
</evidence>
<evidence type="ECO:0000269" key="9">
    <source>
    </source>
</evidence>
<evidence type="ECO:0000303" key="10">
    <source>
    </source>
</evidence>
<evidence type="ECO:0000303" key="11">
    <source>
    </source>
</evidence>
<evidence type="ECO:0000303" key="12">
    <source>
    </source>
</evidence>
<evidence type="ECO:0000303" key="13">
    <source>
    </source>
</evidence>
<evidence type="ECO:0000305" key="14"/>
<evidence type="ECO:0000312" key="15">
    <source>
        <dbReference type="Araport" id="AT5G61030"/>
    </source>
</evidence>
<evidence type="ECO:0000312" key="16">
    <source>
        <dbReference type="EMBL" id="BAB10366.1"/>
    </source>
</evidence>
<sequence>MAFLSKFGNILKQTTNKQLNAQVSLSSPSLFQAIRCMSSSKLFIGGMAYSMDEDSLREAFTKYGEVVDTRVILDRETGRSRGFGFVTFTSSEAASSAIQALDGRDLHGRVVKVNYANDRTSGGGFGGGGYGGGGGGYGGSGGYGGGAGGYGGSGGYGGGAGGYGGNSGGGYGGNAAGGYGGSGAGGYGGDATGHGGAGGGYGSSGGFGSSGNTYGEGSSASAGAVGDYNGSSGYGSANTYGSSNGGFAGDSQFGGSPVGNSSQFGGDNTQFTAGGQFGGEDQFGSMEKSETKMEDGPIGGEFEDVAKRA</sequence>